<dbReference type="EMBL" id="AP011115">
    <property type="protein sequence ID" value="BAH54439.1"/>
    <property type="molecule type" value="Genomic_DNA"/>
</dbReference>
<dbReference type="RefSeq" id="WP_005239635.1">
    <property type="nucleotide sequence ID" value="NC_012522.1"/>
</dbReference>
<dbReference type="SMR" id="C1B018"/>
<dbReference type="STRING" id="632772.ROP_61920"/>
<dbReference type="GeneID" id="69890522"/>
<dbReference type="KEGG" id="rop:ROP_61920"/>
<dbReference type="PATRIC" id="fig|632772.20.peg.6468"/>
<dbReference type="HOGENOM" id="CLU_058591_0_0_11"/>
<dbReference type="OrthoDB" id="9806396at2"/>
<dbReference type="Proteomes" id="UP000002212">
    <property type="component" value="Chromosome"/>
</dbReference>
<dbReference type="GO" id="GO:0022627">
    <property type="term" value="C:cytosolic small ribosomal subunit"/>
    <property type="evidence" value="ECO:0007669"/>
    <property type="project" value="TreeGrafter"/>
</dbReference>
<dbReference type="GO" id="GO:0003729">
    <property type="term" value="F:mRNA binding"/>
    <property type="evidence" value="ECO:0007669"/>
    <property type="project" value="UniProtKB-UniRule"/>
</dbReference>
<dbReference type="GO" id="GO:0019843">
    <property type="term" value="F:rRNA binding"/>
    <property type="evidence" value="ECO:0007669"/>
    <property type="project" value="UniProtKB-UniRule"/>
</dbReference>
<dbReference type="GO" id="GO:0003735">
    <property type="term" value="F:structural constituent of ribosome"/>
    <property type="evidence" value="ECO:0007669"/>
    <property type="project" value="InterPro"/>
</dbReference>
<dbReference type="GO" id="GO:0006412">
    <property type="term" value="P:translation"/>
    <property type="evidence" value="ECO:0007669"/>
    <property type="project" value="UniProtKB-UniRule"/>
</dbReference>
<dbReference type="CDD" id="cd02412">
    <property type="entry name" value="KH-II_30S_S3"/>
    <property type="match status" value="1"/>
</dbReference>
<dbReference type="FunFam" id="3.30.1140.32:FF:000002">
    <property type="entry name" value="30S ribosomal protein S3"/>
    <property type="match status" value="1"/>
</dbReference>
<dbReference type="FunFam" id="3.30.300.20:FF:000001">
    <property type="entry name" value="30S ribosomal protein S3"/>
    <property type="match status" value="1"/>
</dbReference>
<dbReference type="Gene3D" id="3.30.300.20">
    <property type="match status" value="1"/>
</dbReference>
<dbReference type="Gene3D" id="3.30.1140.32">
    <property type="entry name" value="Ribosomal protein S3, C-terminal domain"/>
    <property type="match status" value="1"/>
</dbReference>
<dbReference type="HAMAP" id="MF_01309_B">
    <property type="entry name" value="Ribosomal_uS3_B"/>
    <property type="match status" value="1"/>
</dbReference>
<dbReference type="InterPro" id="IPR004087">
    <property type="entry name" value="KH_dom"/>
</dbReference>
<dbReference type="InterPro" id="IPR015946">
    <property type="entry name" value="KH_dom-like_a/b"/>
</dbReference>
<dbReference type="InterPro" id="IPR004044">
    <property type="entry name" value="KH_dom_type_2"/>
</dbReference>
<dbReference type="InterPro" id="IPR009019">
    <property type="entry name" value="KH_sf_prok-type"/>
</dbReference>
<dbReference type="InterPro" id="IPR036419">
    <property type="entry name" value="Ribosomal_S3_C_sf"/>
</dbReference>
<dbReference type="InterPro" id="IPR005704">
    <property type="entry name" value="Ribosomal_uS3_bac-typ"/>
</dbReference>
<dbReference type="InterPro" id="IPR001351">
    <property type="entry name" value="Ribosomal_uS3_C"/>
</dbReference>
<dbReference type="InterPro" id="IPR018280">
    <property type="entry name" value="Ribosomal_uS3_CS"/>
</dbReference>
<dbReference type="NCBIfam" id="TIGR01009">
    <property type="entry name" value="rpsC_bact"/>
    <property type="match status" value="1"/>
</dbReference>
<dbReference type="PANTHER" id="PTHR11760">
    <property type="entry name" value="30S/40S RIBOSOMAL PROTEIN S3"/>
    <property type="match status" value="1"/>
</dbReference>
<dbReference type="PANTHER" id="PTHR11760:SF19">
    <property type="entry name" value="SMALL RIBOSOMAL SUBUNIT PROTEIN US3C"/>
    <property type="match status" value="1"/>
</dbReference>
<dbReference type="Pfam" id="PF07650">
    <property type="entry name" value="KH_2"/>
    <property type="match status" value="1"/>
</dbReference>
<dbReference type="Pfam" id="PF00189">
    <property type="entry name" value="Ribosomal_S3_C"/>
    <property type="match status" value="1"/>
</dbReference>
<dbReference type="SMART" id="SM00322">
    <property type="entry name" value="KH"/>
    <property type="match status" value="1"/>
</dbReference>
<dbReference type="SUPFAM" id="SSF54814">
    <property type="entry name" value="Prokaryotic type KH domain (KH-domain type II)"/>
    <property type="match status" value="1"/>
</dbReference>
<dbReference type="SUPFAM" id="SSF54821">
    <property type="entry name" value="Ribosomal protein S3 C-terminal domain"/>
    <property type="match status" value="1"/>
</dbReference>
<dbReference type="PROSITE" id="PS50823">
    <property type="entry name" value="KH_TYPE_2"/>
    <property type="match status" value="1"/>
</dbReference>
<dbReference type="PROSITE" id="PS00548">
    <property type="entry name" value="RIBOSOMAL_S3"/>
    <property type="match status" value="1"/>
</dbReference>
<feature type="chain" id="PRO_1000165507" description="Small ribosomal subunit protein uS3">
    <location>
        <begin position="1"/>
        <end position="268"/>
    </location>
</feature>
<feature type="domain" description="KH type-2" evidence="1">
    <location>
        <begin position="38"/>
        <end position="106"/>
    </location>
</feature>
<feature type="region of interest" description="Disordered" evidence="2">
    <location>
        <begin position="218"/>
        <end position="268"/>
    </location>
</feature>
<feature type="compositionally biased region" description="Low complexity" evidence="2">
    <location>
        <begin position="237"/>
        <end position="268"/>
    </location>
</feature>
<evidence type="ECO:0000255" key="1">
    <source>
        <dbReference type="HAMAP-Rule" id="MF_01309"/>
    </source>
</evidence>
<evidence type="ECO:0000256" key="2">
    <source>
        <dbReference type="SAM" id="MobiDB-lite"/>
    </source>
</evidence>
<evidence type="ECO:0000305" key="3"/>
<sequence>MGQKINPHGFRLGITTDWKSRWYADKQYAEYVKEDVAIRKLLATGMERAGIAKVEIERTRDRVRVDIHTARPGIVIGRRGAEADRIRSELEKLTGKQVQLNILEVKNAEAEAQLVAQGVAEQLSNRVAFRRAMRKAIQSAMRQPNVKGIRVQCSGRLGGAEMSRSEFYREGRVPLHTLRADIDYGLYEAKTTFGRIGVKVWIYKGDIVGGKRELAANVAAPAGDRPRRERPSRPRRSGATGTTATSTEAGRAATATADAPATTEQKEG</sequence>
<reference key="1">
    <citation type="submission" date="2009-03" db="EMBL/GenBank/DDBJ databases">
        <title>Comparison of the complete genome sequences of Rhodococcus erythropolis PR4 and Rhodococcus opacus B4.</title>
        <authorList>
            <person name="Takarada H."/>
            <person name="Sekine M."/>
            <person name="Hosoyama A."/>
            <person name="Yamada R."/>
            <person name="Fujisawa T."/>
            <person name="Omata S."/>
            <person name="Shimizu A."/>
            <person name="Tsukatani N."/>
            <person name="Tanikawa S."/>
            <person name="Fujita N."/>
            <person name="Harayama S."/>
        </authorList>
    </citation>
    <scope>NUCLEOTIDE SEQUENCE [LARGE SCALE GENOMIC DNA]</scope>
    <source>
        <strain>B4</strain>
    </source>
</reference>
<protein>
    <recommendedName>
        <fullName evidence="1">Small ribosomal subunit protein uS3</fullName>
    </recommendedName>
    <alternativeName>
        <fullName evidence="3">30S ribosomal protein S3</fullName>
    </alternativeName>
</protein>
<gene>
    <name evidence="1" type="primary">rpsC</name>
    <name type="ordered locus">ROP_61920</name>
</gene>
<comment type="function">
    <text evidence="1">Binds the lower part of the 30S subunit head. Binds mRNA in the 70S ribosome, positioning it for translation.</text>
</comment>
<comment type="subunit">
    <text evidence="1">Part of the 30S ribosomal subunit. Forms a tight complex with proteins S10 and S14.</text>
</comment>
<comment type="similarity">
    <text evidence="1">Belongs to the universal ribosomal protein uS3 family.</text>
</comment>
<name>RS3_RHOOB</name>
<proteinExistence type="inferred from homology"/>
<accession>C1B018</accession>
<organism>
    <name type="scientific">Rhodococcus opacus (strain B4)</name>
    <dbReference type="NCBI Taxonomy" id="632772"/>
    <lineage>
        <taxon>Bacteria</taxon>
        <taxon>Bacillati</taxon>
        <taxon>Actinomycetota</taxon>
        <taxon>Actinomycetes</taxon>
        <taxon>Mycobacteriales</taxon>
        <taxon>Nocardiaceae</taxon>
        <taxon>Rhodococcus</taxon>
    </lineage>
</organism>
<keyword id="KW-0687">Ribonucleoprotein</keyword>
<keyword id="KW-0689">Ribosomal protein</keyword>
<keyword id="KW-0694">RNA-binding</keyword>
<keyword id="KW-0699">rRNA-binding</keyword>